<protein>
    <recommendedName>
        <fullName evidence="1">Ribonuclease T</fullName>
        <ecNumber evidence="1">3.1.13.-</ecNumber>
    </recommendedName>
    <alternativeName>
        <fullName evidence="1">Exoribonuclease T</fullName>
        <shortName evidence="1">RNase T</shortName>
    </alternativeName>
</protein>
<evidence type="ECO:0000255" key="1">
    <source>
        <dbReference type="HAMAP-Rule" id="MF_00157"/>
    </source>
</evidence>
<proteinExistence type="inferred from homology"/>
<feature type="chain" id="PRO_1000011419" description="Ribonuclease T">
    <location>
        <begin position="1"/>
        <end position="222"/>
    </location>
</feature>
<feature type="domain" description="Exonuclease" evidence="1">
    <location>
        <begin position="20"/>
        <end position="194"/>
    </location>
</feature>
<feature type="active site" description="Proton donor/acceptor" evidence="1">
    <location>
        <position position="181"/>
    </location>
</feature>
<feature type="binding site" evidence="1">
    <location>
        <position position="23"/>
    </location>
    <ligand>
        <name>Mg(2+)</name>
        <dbReference type="ChEBI" id="CHEBI:18420"/>
        <label>1</label>
        <note>catalytic</note>
    </ligand>
</feature>
<feature type="binding site" evidence="1">
    <location>
        <position position="23"/>
    </location>
    <ligand>
        <name>Mg(2+)</name>
        <dbReference type="ChEBI" id="CHEBI:18420"/>
        <label>2</label>
        <note>catalytic</note>
    </ligand>
</feature>
<feature type="binding site" evidence="1">
    <location>
        <position position="25"/>
    </location>
    <ligand>
        <name>Mg(2+)</name>
        <dbReference type="ChEBI" id="CHEBI:18420"/>
        <label>2</label>
        <note>catalytic</note>
    </ligand>
</feature>
<feature type="binding site" evidence="1">
    <location>
        <position position="181"/>
    </location>
    <ligand>
        <name>Mg(2+)</name>
        <dbReference type="ChEBI" id="CHEBI:18420"/>
        <label>2</label>
        <note>catalytic</note>
    </ligand>
</feature>
<feature type="binding site" evidence="1">
    <location>
        <position position="186"/>
    </location>
    <ligand>
        <name>Mg(2+)</name>
        <dbReference type="ChEBI" id="CHEBI:18420"/>
        <label>2</label>
        <note>catalytic</note>
    </ligand>
</feature>
<feature type="site" description="Important for substrate binding and specificity" evidence="1">
    <location>
        <position position="29"/>
    </location>
</feature>
<feature type="site" description="Important for substrate binding and specificity" evidence="1">
    <location>
        <position position="77"/>
    </location>
</feature>
<feature type="site" description="Important for substrate binding and specificity" evidence="1">
    <location>
        <position position="124"/>
    </location>
</feature>
<feature type="site" description="Important for substrate binding and specificity" evidence="1">
    <location>
        <position position="146"/>
    </location>
</feature>
<comment type="function">
    <text evidence="1">Trims short 3' overhangs of a variety of RNA species, leaving a one or two nucleotide 3' overhang. Responsible for the end-turnover of tRNA: specifically removes the terminal AMP residue from uncharged tRNA (tRNA-C-C-A). Also appears to be involved in tRNA biosynthesis.</text>
</comment>
<comment type="cofactor">
    <cofactor evidence="1">
        <name>Mg(2+)</name>
        <dbReference type="ChEBI" id="CHEBI:18420"/>
    </cofactor>
    <text evidence="1">Binds two Mg(2+) per subunit. The active form of the enzyme binds two Mg(2+) ions in its active site. The first Mg(2+) forms only one salt bridge with the protein.</text>
</comment>
<comment type="subunit">
    <text evidence="1">Homodimer.</text>
</comment>
<comment type="similarity">
    <text evidence="1">Belongs to the RNase T family.</text>
</comment>
<dbReference type="EC" id="3.1.13.-" evidence="1"/>
<dbReference type="EMBL" id="CP000444">
    <property type="protein sequence ID" value="ABI43432.1"/>
    <property type="molecule type" value="Genomic_DNA"/>
</dbReference>
<dbReference type="SMR" id="Q0HTX3"/>
<dbReference type="KEGG" id="shm:Shewmr7_2447"/>
<dbReference type="HOGENOM" id="CLU_082724_0_0_6"/>
<dbReference type="GO" id="GO:0005829">
    <property type="term" value="C:cytosol"/>
    <property type="evidence" value="ECO:0007669"/>
    <property type="project" value="TreeGrafter"/>
</dbReference>
<dbReference type="GO" id="GO:0008408">
    <property type="term" value="F:3'-5' exonuclease activity"/>
    <property type="evidence" value="ECO:0007669"/>
    <property type="project" value="TreeGrafter"/>
</dbReference>
<dbReference type="GO" id="GO:0000287">
    <property type="term" value="F:magnesium ion binding"/>
    <property type="evidence" value="ECO:0007669"/>
    <property type="project" value="UniProtKB-UniRule"/>
</dbReference>
<dbReference type="GO" id="GO:0003676">
    <property type="term" value="F:nucleic acid binding"/>
    <property type="evidence" value="ECO:0007669"/>
    <property type="project" value="InterPro"/>
</dbReference>
<dbReference type="GO" id="GO:0016896">
    <property type="term" value="F:RNA exonuclease activity, producing 5'-phosphomonoesters"/>
    <property type="evidence" value="ECO:0007669"/>
    <property type="project" value="UniProtKB-UniRule"/>
</dbReference>
<dbReference type="GO" id="GO:0045004">
    <property type="term" value="P:DNA replication proofreading"/>
    <property type="evidence" value="ECO:0007669"/>
    <property type="project" value="TreeGrafter"/>
</dbReference>
<dbReference type="GO" id="GO:0008033">
    <property type="term" value="P:tRNA processing"/>
    <property type="evidence" value="ECO:0007669"/>
    <property type="project" value="UniProtKB-KW"/>
</dbReference>
<dbReference type="CDD" id="cd06134">
    <property type="entry name" value="RNaseT"/>
    <property type="match status" value="1"/>
</dbReference>
<dbReference type="FunFam" id="3.30.420.10:FF:000009">
    <property type="entry name" value="Ribonuclease T"/>
    <property type="match status" value="1"/>
</dbReference>
<dbReference type="Gene3D" id="3.30.420.10">
    <property type="entry name" value="Ribonuclease H-like superfamily/Ribonuclease H"/>
    <property type="match status" value="1"/>
</dbReference>
<dbReference type="HAMAP" id="MF_00157">
    <property type="entry name" value="RNase_T"/>
    <property type="match status" value="1"/>
</dbReference>
<dbReference type="InterPro" id="IPR013520">
    <property type="entry name" value="Exonuclease_RNaseT/DNA_pol3"/>
</dbReference>
<dbReference type="InterPro" id="IPR005987">
    <property type="entry name" value="RNase_T"/>
</dbReference>
<dbReference type="InterPro" id="IPR012337">
    <property type="entry name" value="RNaseH-like_sf"/>
</dbReference>
<dbReference type="InterPro" id="IPR036397">
    <property type="entry name" value="RNaseH_sf"/>
</dbReference>
<dbReference type="NCBIfam" id="TIGR01298">
    <property type="entry name" value="RNaseT"/>
    <property type="match status" value="1"/>
</dbReference>
<dbReference type="PANTHER" id="PTHR30231">
    <property type="entry name" value="DNA POLYMERASE III SUBUNIT EPSILON"/>
    <property type="match status" value="1"/>
</dbReference>
<dbReference type="PANTHER" id="PTHR30231:SF2">
    <property type="entry name" value="RIBONUCLEASE T"/>
    <property type="match status" value="1"/>
</dbReference>
<dbReference type="Pfam" id="PF00929">
    <property type="entry name" value="RNase_T"/>
    <property type="match status" value="1"/>
</dbReference>
<dbReference type="SMART" id="SM00479">
    <property type="entry name" value="EXOIII"/>
    <property type="match status" value="1"/>
</dbReference>
<dbReference type="SUPFAM" id="SSF53098">
    <property type="entry name" value="Ribonuclease H-like"/>
    <property type="match status" value="1"/>
</dbReference>
<organism>
    <name type="scientific">Shewanella sp. (strain MR-7)</name>
    <dbReference type="NCBI Taxonomy" id="60481"/>
    <lineage>
        <taxon>Bacteria</taxon>
        <taxon>Pseudomonadati</taxon>
        <taxon>Pseudomonadota</taxon>
        <taxon>Gammaproteobacteria</taxon>
        <taxon>Alteromonadales</taxon>
        <taxon>Shewanellaceae</taxon>
        <taxon>Shewanella</taxon>
    </lineage>
</organism>
<accession>Q0HTX3</accession>
<gene>
    <name evidence="1" type="primary">rnt</name>
    <name type="ordered locus">Shewmr7_2447</name>
</gene>
<keyword id="KW-0269">Exonuclease</keyword>
<keyword id="KW-0378">Hydrolase</keyword>
<keyword id="KW-0460">Magnesium</keyword>
<keyword id="KW-0479">Metal-binding</keyword>
<keyword id="KW-0540">Nuclease</keyword>
<keyword id="KW-0819">tRNA processing</keyword>
<sequence>MSDISDANKLKHRFRGYFPVVIDVETAGFNSQTDALLEIAVTLLKMDDEGLLGIDKTLHFNIEPFEGANLEPEALAFNGIDPTNPLRGAVSEKEAFLEIFKAVKKAQKASDCHRSIIVAHNAAFDHGFVSKAIERCDLKRSPFHPFATFDTATLAGLAIGHTVLAKACIMAGIPFDNKEAHSALYDTERTAELFCYIVNRWKHLGGWPLLAAGESEDTDGEE</sequence>
<name>RNT_SHESR</name>
<reference key="1">
    <citation type="submission" date="2006-08" db="EMBL/GenBank/DDBJ databases">
        <title>Complete sequence of chromosome 1 of Shewanella sp. MR-7.</title>
        <authorList>
            <person name="Copeland A."/>
            <person name="Lucas S."/>
            <person name="Lapidus A."/>
            <person name="Barry K."/>
            <person name="Detter J.C."/>
            <person name="Glavina del Rio T."/>
            <person name="Hammon N."/>
            <person name="Israni S."/>
            <person name="Dalin E."/>
            <person name="Tice H."/>
            <person name="Pitluck S."/>
            <person name="Kiss H."/>
            <person name="Brettin T."/>
            <person name="Bruce D."/>
            <person name="Han C."/>
            <person name="Tapia R."/>
            <person name="Gilna P."/>
            <person name="Schmutz J."/>
            <person name="Larimer F."/>
            <person name="Land M."/>
            <person name="Hauser L."/>
            <person name="Kyrpides N."/>
            <person name="Mikhailova N."/>
            <person name="Nealson K."/>
            <person name="Konstantinidis K."/>
            <person name="Klappenbach J."/>
            <person name="Tiedje J."/>
            <person name="Richardson P."/>
        </authorList>
    </citation>
    <scope>NUCLEOTIDE SEQUENCE [LARGE SCALE GENOMIC DNA]</scope>
    <source>
        <strain>MR-7</strain>
    </source>
</reference>